<proteinExistence type="inferred from homology"/>
<dbReference type="EC" id="2.6.1.52" evidence="1"/>
<dbReference type="EMBL" id="CP000511">
    <property type="protein sequence ID" value="ABM15805.1"/>
    <property type="molecule type" value="Genomic_DNA"/>
</dbReference>
<dbReference type="RefSeq" id="WP_011782177.1">
    <property type="nucleotide sequence ID" value="NZ_JACKSD010000148.1"/>
</dbReference>
<dbReference type="SMR" id="A1TF55"/>
<dbReference type="STRING" id="350058.Mvan_5033"/>
<dbReference type="KEGG" id="mva:Mvan_5033"/>
<dbReference type="eggNOG" id="COG1932">
    <property type="taxonomic scope" value="Bacteria"/>
</dbReference>
<dbReference type="HOGENOM" id="CLU_061974_0_0_11"/>
<dbReference type="UniPathway" id="UPA00135">
    <property type="reaction ID" value="UER00197"/>
</dbReference>
<dbReference type="UniPathway" id="UPA00244">
    <property type="reaction ID" value="UER00311"/>
</dbReference>
<dbReference type="Proteomes" id="UP000009159">
    <property type="component" value="Chromosome"/>
</dbReference>
<dbReference type="GO" id="GO:0005737">
    <property type="term" value="C:cytoplasm"/>
    <property type="evidence" value="ECO:0007669"/>
    <property type="project" value="UniProtKB-SubCell"/>
</dbReference>
<dbReference type="GO" id="GO:0008453">
    <property type="term" value="F:alanine-glyoxylate transaminase activity"/>
    <property type="evidence" value="ECO:0007669"/>
    <property type="project" value="TreeGrafter"/>
</dbReference>
<dbReference type="GO" id="GO:0004760">
    <property type="term" value="F:L-serine-pyruvate transaminase activity"/>
    <property type="evidence" value="ECO:0007669"/>
    <property type="project" value="TreeGrafter"/>
</dbReference>
<dbReference type="GO" id="GO:0004648">
    <property type="term" value="F:O-phospho-L-serine:2-oxoglutarate aminotransferase activity"/>
    <property type="evidence" value="ECO:0007669"/>
    <property type="project" value="UniProtKB-UniRule"/>
</dbReference>
<dbReference type="GO" id="GO:0030170">
    <property type="term" value="F:pyridoxal phosphate binding"/>
    <property type="evidence" value="ECO:0007669"/>
    <property type="project" value="UniProtKB-UniRule"/>
</dbReference>
<dbReference type="GO" id="GO:0019265">
    <property type="term" value="P:glycine biosynthetic process, by transamination of glyoxylate"/>
    <property type="evidence" value="ECO:0007669"/>
    <property type="project" value="TreeGrafter"/>
</dbReference>
<dbReference type="GO" id="GO:0006564">
    <property type="term" value="P:L-serine biosynthetic process"/>
    <property type="evidence" value="ECO:0007669"/>
    <property type="project" value="UniProtKB-UniRule"/>
</dbReference>
<dbReference type="GO" id="GO:0008615">
    <property type="term" value="P:pyridoxine biosynthetic process"/>
    <property type="evidence" value="ECO:0007669"/>
    <property type="project" value="UniProtKB-UniRule"/>
</dbReference>
<dbReference type="Gene3D" id="3.90.1150.10">
    <property type="entry name" value="Aspartate Aminotransferase, domain 1"/>
    <property type="match status" value="1"/>
</dbReference>
<dbReference type="Gene3D" id="3.40.640.10">
    <property type="entry name" value="Type I PLP-dependent aspartate aminotransferase-like (Major domain)"/>
    <property type="match status" value="1"/>
</dbReference>
<dbReference type="HAMAP" id="MF_00160">
    <property type="entry name" value="SerC_aminotrans_5"/>
    <property type="match status" value="1"/>
</dbReference>
<dbReference type="InterPro" id="IPR000192">
    <property type="entry name" value="Aminotrans_V_dom"/>
</dbReference>
<dbReference type="InterPro" id="IPR022278">
    <property type="entry name" value="Pser_aminoTfrase"/>
</dbReference>
<dbReference type="InterPro" id="IPR006272">
    <property type="entry name" value="Pser_aminoTfrase_mycobac"/>
</dbReference>
<dbReference type="InterPro" id="IPR015424">
    <property type="entry name" value="PyrdxlP-dep_Trfase"/>
</dbReference>
<dbReference type="InterPro" id="IPR015421">
    <property type="entry name" value="PyrdxlP-dep_Trfase_major"/>
</dbReference>
<dbReference type="InterPro" id="IPR015422">
    <property type="entry name" value="PyrdxlP-dep_Trfase_small"/>
</dbReference>
<dbReference type="NCBIfam" id="TIGR01366">
    <property type="entry name" value="serC_3"/>
    <property type="match status" value="1"/>
</dbReference>
<dbReference type="PANTHER" id="PTHR21152:SF40">
    <property type="entry name" value="ALANINE--GLYOXYLATE AMINOTRANSFERASE"/>
    <property type="match status" value="1"/>
</dbReference>
<dbReference type="PANTHER" id="PTHR21152">
    <property type="entry name" value="AMINOTRANSFERASE CLASS V"/>
    <property type="match status" value="1"/>
</dbReference>
<dbReference type="Pfam" id="PF00266">
    <property type="entry name" value="Aminotran_5"/>
    <property type="match status" value="1"/>
</dbReference>
<dbReference type="PIRSF" id="PIRSF000525">
    <property type="entry name" value="SerC"/>
    <property type="match status" value="1"/>
</dbReference>
<dbReference type="SUPFAM" id="SSF53383">
    <property type="entry name" value="PLP-dependent transferases"/>
    <property type="match status" value="1"/>
</dbReference>
<keyword id="KW-0028">Amino-acid biosynthesis</keyword>
<keyword id="KW-0032">Aminotransferase</keyword>
<keyword id="KW-0963">Cytoplasm</keyword>
<keyword id="KW-0663">Pyridoxal phosphate</keyword>
<keyword id="KW-0664">Pyridoxine biosynthesis</keyword>
<keyword id="KW-0718">Serine biosynthesis</keyword>
<keyword id="KW-0808">Transferase</keyword>
<comment type="function">
    <text evidence="1">Catalyzes the reversible conversion of 3-phosphohydroxypyruvate to phosphoserine and of 3-hydroxy-2-oxo-4-phosphonooxybutanoate to phosphohydroxythreonine.</text>
</comment>
<comment type="catalytic activity">
    <reaction evidence="1">
        <text>O-phospho-L-serine + 2-oxoglutarate = 3-phosphooxypyruvate + L-glutamate</text>
        <dbReference type="Rhea" id="RHEA:14329"/>
        <dbReference type="ChEBI" id="CHEBI:16810"/>
        <dbReference type="ChEBI" id="CHEBI:18110"/>
        <dbReference type="ChEBI" id="CHEBI:29985"/>
        <dbReference type="ChEBI" id="CHEBI:57524"/>
        <dbReference type="EC" id="2.6.1.52"/>
    </reaction>
</comment>
<comment type="catalytic activity">
    <reaction evidence="1">
        <text>4-(phosphooxy)-L-threonine + 2-oxoglutarate = (R)-3-hydroxy-2-oxo-4-phosphooxybutanoate + L-glutamate</text>
        <dbReference type="Rhea" id="RHEA:16573"/>
        <dbReference type="ChEBI" id="CHEBI:16810"/>
        <dbReference type="ChEBI" id="CHEBI:29985"/>
        <dbReference type="ChEBI" id="CHEBI:58452"/>
        <dbReference type="ChEBI" id="CHEBI:58538"/>
        <dbReference type="EC" id="2.6.1.52"/>
    </reaction>
</comment>
<comment type="cofactor">
    <cofactor evidence="1">
        <name>pyridoxal 5'-phosphate</name>
        <dbReference type="ChEBI" id="CHEBI:597326"/>
    </cofactor>
    <text evidence="1">Binds 1 pyridoxal phosphate per subunit.</text>
</comment>
<comment type="pathway">
    <text evidence="1">Amino-acid biosynthesis; L-serine biosynthesis; L-serine from 3-phospho-D-glycerate: step 2/3.</text>
</comment>
<comment type="pathway">
    <text evidence="1">Cofactor biosynthesis; pyridoxine 5'-phosphate biosynthesis; pyridoxine 5'-phosphate from D-erythrose 4-phosphate: step 3/5.</text>
</comment>
<comment type="subunit">
    <text evidence="1">Homodimer.</text>
</comment>
<comment type="subcellular location">
    <subcellularLocation>
        <location evidence="1">Cytoplasm</location>
    </subcellularLocation>
</comment>
<comment type="similarity">
    <text evidence="1">Belongs to the class-V pyridoxal-phosphate-dependent aminotransferase family. SerC subfamily.</text>
</comment>
<protein>
    <recommendedName>
        <fullName>Putative phosphoserine aminotransferase</fullName>
        <ecNumber evidence="1">2.6.1.52</ecNumber>
    </recommendedName>
    <alternativeName>
        <fullName evidence="1">Phosphohydroxythreonine aminotransferase</fullName>
        <shortName evidence="1">PSAT</shortName>
    </alternativeName>
</protein>
<feature type="chain" id="PRO_0000293589" description="Putative phosphoserine aminotransferase">
    <location>
        <begin position="1"/>
        <end position="371"/>
    </location>
</feature>
<feature type="binding site" evidence="1">
    <location>
        <position position="45"/>
    </location>
    <ligand>
        <name>L-glutamate</name>
        <dbReference type="ChEBI" id="CHEBI:29985"/>
    </ligand>
</feature>
<feature type="binding site" evidence="1">
    <location>
        <position position="103"/>
    </location>
    <ligand>
        <name>pyridoxal 5'-phosphate</name>
        <dbReference type="ChEBI" id="CHEBI:597326"/>
    </ligand>
</feature>
<feature type="binding site" evidence="1">
    <location>
        <position position="149"/>
    </location>
    <ligand>
        <name>pyridoxal 5'-phosphate</name>
        <dbReference type="ChEBI" id="CHEBI:597326"/>
    </ligand>
</feature>
<feature type="binding site" evidence="1">
    <location>
        <position position="171"/>
    </location>
    <ligand>
        <name>pyridoxal 5'-phosphate</name>
        <dbReference type="ChEBI" id="CHEBI:597326"/>
    </ligand>
</feature>
<feature type="binding site" evidence="1">
    <location>
        <position position="194"/>
    </location>
    <ligand>
        <name>pyridoxal 5'-phosphate</name>
        <dbReference type="ChEBI" id="CHEBI:597326"/>
    </ligand>
</feature>
<feature type="binding site" evidence="1">
    <location>
        <begin position="246"/>
        <end position="247"/>
    </location>
    <ligand>
        <name>pyridoxal 5'-phosphate</name>
        <dbReference type="ChEBI" id="CHEBI:597326"/>
    </ligand>
</feature>
<feature type="modified residue" description="N6-(pyridoxal phosphate)lysine" evidence="1">
    <location>
        <position position="195"/>
    </location>
</feature>
<reference key="1">
    <citation type="submission" date="2006-12" db="EMBL/GenBank/DDBJ databases">
        <title>Complete sequence of Mycobacterium vanbaalenii PYR-1.</title>
        <authorList>
            <consortium name="US DOE Joint Genome Institute"/>
            <person name="Copeland A."/>
            <person name="Lucas S."/>
            <person name="Lapidus A."/>
            <person name="Barry K."/>
            <person name="Detter J.C."/>
            <person name="Glavina del Rio T."/>
            <person name="Hammon N."/>
            <person name="Israni S."/>
            <person name="Dalin E."/>
            <person name="Tice H."/>
            <person name="Pitluck S."/>
            <person name="Singan V."/>
            <person name="Schmutz J."/>
            <person name="Larimer F."/>
            <person name="Land M."/>
            <person name="Hauser L."/>
            <person name="Kyrpides N."/>
            <person name="Anderson I.J."/>
            <person name="Miller C."/>
            <person name="Richardson P."/>
        </authorList>
    </citation>
    <scope>NUCLEOTIDE SEQUENCE [LARGE SCALE GENOMIC DNA]</scope>
    <source>
        <strain>DSM 7251 / JCM 13017 / BCRC 16820 / KCTC 9966 / NRRL B-24157 / PYR-1</strain>
    </source>
</reference>
<gene>
    <name evidence="1" type="primary">serC</name>
    <name type="ordered locus">Mvan_5033</name>
</gene>
<organism>
    <name type="scientific">Mycolicibacterium vanbaalenii (strain DSM 7251 / JCM 13017 / BCRC 16820 / KCTC 9966 / NRRL B-24157 / PYR-1)</name>
    <name type="common">Mycobacterium vanbaalenii</name>
    <dbReference type="NCBI Taxonomy" id="350058"/>
    <lineage>
        <taxon>Bacteria</taxon>
        <taxon>Bacillati</taxon>
        <taxon>Actinomycetota</taxon>
        <taxon>Actinomycetes</taxon>
        <taxon>Mycobacteriales</taxon>
        <taxon>Mycobacteriaceae</taxon>
        <taxon>Mycolicibacterium</taxon>
    </lineage>
</organism>
<name>SERC_MYCVP</name>
<evidence type="ECO:0000255" key="1">
    <source>
        <dbReference type="HAMAP-Rule" id="MF_00160"/>
    </source>
</evidence>
<sequence length="371" mass="39070">MAENLEIPADLKPADGRFGCGPSKVRPEQLKALAASGDLFGTSHRQAPVKNLVGRVRDGLRQLFALPDGYEVILGNGGSTAFWDAAAFGLVDKRSLHLTYGEFSAKFASAVAKNPFVGDPIIVKADAGSAPKPQSDPSVDVIAWAHNETSTGVAVPVVRPDGSGDALIVIDATSAAGGLPVDITEADAYYFAPQKNFAGDGGLWLAILSPAALARVDAIAAAGRWVPEFLSLPIAIENSLKNQTYNTPAIATLILLAEQIDWLLGNGGLDWATKRTAESSSRLYSWAEAASFATPFVADPALRSQVVGTVDFSDSVDAAAVAKVLRANGVVDTEPYRKLGRNQLRVGMFPAVEPDDVSALTACVDWVVERL</sequence>
<accession>A1TF55</accession>